<comment type="subunit">
    <text evidence="1">Part of the 30S ribosomal subunit.</text>
</comment>
<comment type="subcellular location">
    <subcellularLocation>
        <location>Plastid</location>
        <location>Chloroplast</location>
    </subcellularLocation>
</comment>
<comment type="similarity">
    <text evidence="1">Belongs to the universal ribosomal protein uS11 family.</text>
</comment>
<dbReference type="EMBL" id="AF166114">
    <property type="protein sequence ID" value="AAF43802.1"/>
    <property type="molecule type" value="Genomic_DNA"/>
</dbReference>
<dbReference type="RefSeq" id="NP_038361.1">
    <property type="nucleotide sequence ID" value="NC_002186.1"/>
</dbReference>
<dbReference type="SMR" id="Q9MUU9"/>
<dbReference type="GeneID" id="800953"/>
<dbReference type="GO" id="GO:0009507">
    <property type="term" value="C:chloroplast"/>
    <property type="evidence" value="ECO:0007669"/>
    <property type="project" value="UniProtKB-SubCell"/>
</dbReference>
<dbReference type="GO" id="GO:1990904">
    <property type="term" value="C:ribonucleoprotein complex"/>
    <property type="evidence" value="ECO:0007669"/>
    <property type="project" value="UniProtKB-KW"/>
</dbReference>
<dbReference type="GO" id="GO:0005840">
    <property type="term" value="C:ribosome"/>
    <property type="evidence" value="ECO:0007669"/>
    <property type="project" value="UniProtKB-KW"/>
</dbReference>
<dbReference type="GO" id="GO:0019843">
    <property type="term" value="F:rRNA binding"/>
    <property type="evidence" value="ECO:0007669"/>
    <property type="project" value="UniProtKB-UniRule"/>
</dbReference>
<dbReference type="GO" id="GO:0003735">
    <property type="term" value="F:structural constituent of ribosome"/>
    <property type="evidence" value="ECO:0007669"/>
    <property type="project" value="InterPro"/>
</dbReference>
<dbReference type="GO" id="GO:0006412">
    <property type="term" value="P:translation"/>
    <property type="evidence" value="ECO:0007669"/>
    <property type="project" value="UniProtKB-UniRule"/>
</dbReference>
<dbReference type="FunFam" id="3.30.420.80:FF:000001">
    <property type="entry name" value="30S ribosomal protein S11"/>
    <property type="match status" value="1"/>
</dbReference>
<dbReference type="Gene3D" id="3.30.420.80">
    <property type="entry name" value="Ribosomal protein S11"/>
    <property type="match status" value="1"/>
</dbReference>
<dbReference type="HAMAP" id="MF_01310">
    <property type="entry name" value="Ribosomal_uS11"/>
    <property type="match status" value="1"/>
</dbReference>
<dbReference type="InterPro" id="IPR001971">
    <property type="entry name" value="Ribosomal_uS11"/>
</dbReference>
<dbReference type="InterPro" id="IPR019981">
    <property type="entry name" value="Ribosomal_uS11_bac-type"/>
</dbReference>
<dbReference type="InterPro" id="IPR018102">
    <property type="entry name" value="Ribosomal_uS11_CS"/>
</dbReference>
<dbReference type="InterPro" id="IPR036967">
    <property type="entry name" value="Ribosomal_uS11_sf"/>
</dbReference>
<dbReference type="NCBIfam" id="NF003698">
    <property type="entry name" value="PRK05309.1"/>
    <property type="match status" value="1"/>
</dbReference>
<dbReference type="NCBIfam" id="TIGR03632">
    <property type="entry name" value="uS11_bact"/>
    <property type="match status" value="1"/>
</dbReference>
<dbReference type="PANTHER" id="PTHR11759">
    <property type="entry name" value="40S RIBOSOMAL PROTEIN S14/30S RIBOSOMAL PROTEIN S11"/>
    <property type="match status" value="1"/>
</dbReference>
<dbReference type="Pfam" id="PF00411">
    <property type="entry name" value="Ribosomal_S11"/>
    <property type="match status" value="1"/>
</dbReference>
<dbReference type="PIRSF" id="PIRSF002131">
    <property type="entry name" value="Ribosomal_S11"/>
    <property type="match status" value="1"/>
</dbReference>
<dbReference type="SUPFAM" id="SSF53137">
    <property type="entry name" value="Translational machinery components"/>
    <property type="match status" value="1"/>
</dbReference>
<dbReference type="PROSITE" id="PS00054">
    <property type="entry name" value="RIBOSOMAL_S11"/>
    <property type="match status" value="1"/>
</dbReference>
<name>RR11_MESVI</name>
<organism>
    <name type="scientific">Mesostigma viride</name>
    <name type="common">Green alga</name>
    <dbReference type="NCBI Taxonomy" id="41882"/>
    <lineage>
        <taxon>Eukaryota</taxon>
        <taxon>Viridiplantae</taxon>
        <taxon>Streptophyta</taxon>
        <taxon>Mesostigmatophyceae</taxon>
        <taxon>Mesostigmatales</taxon>
        <taxon>Mesostigmataceae</taxon>
        <taxon>Mesostigma</taxon>
    </lineage>
</organism>
<accession>Q9MUU9</accession>
<gene>
    <name evidence="1" type="primary">rps11</name>
</gene>
<reference key="1">
    <citation type="journal article" date="2000" name="Nature">
        <title>Ancestral chloroplast genome in Mesostigma viride reveals an early branch of green plant evolution.</title>
        <authorList>
            <person name="Lemieux C."/>
            <person name="Otis C."/>
            <person name="Turmel M."/>
        </authorList>
    </citation>
    <scope>NUCLEOTIDE SEQUENCE [LARGE SCALE GENOMIC DNA]</scope>
    <source>
        <strain>NIES-296 / KY-14 / CCMP 2046</strain>
    </source>
</reference>
<feature type="chain" id="PRO_0000123309" description="Small ribosomal subunit protein uS11c">
    <location>
        <begin position="1"/>
        <end position="130"/>
    </location>
</feature>
<sequence>MAKQIRKIGVRKTKRKIPKGVVHVQATFNNTIVTITDVRGEVLSWSSAGACGFKGTKKGTPFAAQTAAENAVRQVIDQGMKQAEIMISGPGSGRETAIRAIQAAGLGITLIRDVTPIPHNGCRPPKKRRV</sequence>
<geneLocation type="chloroplast"/>
<proteinExistence type="inferred from homology"/>
<keyword id="KW-0150">Chloroplast</keyword>
<keyword id="KW-0934">Plastid</keyword>
<keyword id="KW-0687">Ribonucleoprotein</keyword>
<keyword id="KW-0689">Ribosomal protein</keyword>
<keyword id="KW-0694">RNA-binding</keyword>
<keyword id="KW-0699">rRNA-binding</keyword>
<protein>
    <recommendedName>
        <fullName evidence="1">Small ribosomal subunit protein uS11c</fullName>
    </recommendedName>
    <alternativeName>
        <fullName evidence="2">30S ribosomal protein S11, chloroplastic</fullName>
    </alternativeName>
</protein>
<evidence type="ECO:0000255" key="1">
    <source>
        <dbReference type="HAMAP-Rule" id="MF_01310"/>
    </source>
</evidence>
<evidence type="ECO:0000305" key="2"/>